<proteinExistence type="predicted"/>
<dbReference type="EMBL" id="AL009126">
    <property type="protein sequence ID" value="CAB14264.1"/>
    <property type="molecule type" value="Genomic_DNA"/>
</dbReference>
<dbReference type="PIR" id="F69943">
    <property type="entry name" value="F69943"/>
</dbReference>
<dbReference type="RefSeq" id="NP_390213.1">
    <property type="nucleotide sequence ID" value="NC_000964.3"/>
</dbReference>
<dbReference type="RefSeq" id="WP_010886560.1">
    <property type="nucleotide sequence ID" value="NZ_OZ025638.1"/>
</dbReference>
<dbReference type="FunCoup" id="O32012">
    <property type="interactions" value="17"/>
</dbReference>
<dbReference type="PaxDb" id="224308-BSU23320"/>
<dbReference type="EnsemblBacteria" id="CAB14264">
    <property type="protein sequence ID" value="CAB14264"/>
    <property type="gene ID" value="BSU_23320"/>
</dbReference>
<dbReference type="GeneID" id="938940"/>
<dbReference type="KEGG" id="bsu:BSU23320"/>
<dbReference type="InParanoid" id="O32012"/>
<dbReference type="OrthoDB" id="9862616at2"/>
<dbReference type="BioCyc" id="BSUB:BSU23320-MONOMER"/>
<dbReference type="Proteomes" id="UP000001570">
    <property type="component" value="Chromosome"/>
</dbReference>
<accession>O32012</accession>
<feature type="chain" id="PRO_0000049734" description="Uncharacterized protein YpzC">
    <location>
        <begin position="1"/>
        <end position="78"/>
    </location>
</feature>
<keyword id="KW-1185">Reference proteome</keyword>
<protein>
    <recommendedName>
        <fullName>Uncharacterized protein YpzC</fullName>
    </recommendedName>
</protein>
<sequence length="78" mass="8861">MFIYCIPLISQSMIPMALDKTINVMKVTGMFAATYFTGDNRTPFFAFIICLKSFKLENMDQPPKNKSNIFPAVEDSLL</sequence>
<name>YPZC_BACSU</name>
<reference key="1">
    <citation type="journal article" date="1997" name="Nature">
        <title>The complete genome sequence of the Gram-positive bacterium Bacillus subtilis.</title>
        <authorList>
            <person name="Kunst F."/>
            <person name="Ogasawara N."/>
            <person name="Moszer I."/>
            <person name="Albertini A.M."/>
            <person name="Alloni G."/>
            <person name="Azevedo V."/>
            <person name="Bertero M.G."/>
            <person name="Bessieres P."/>
            <person name="Bolotin A."/>
            <person name="Borchert S."/>
            <person name="Borriss R."/>
            <person name="Boursier L."/>
            <person name="Brans A."/>
            <person name="Braun M."/>
            <person name="Brignell S.C."/>
            <person name="Bron S."/>
            <person name="Brouillet S."/>
            <person name="Bruschi C.V."/>
            <person name="Caldwell B."/>
            <person name="Capuano V."/>
            <person name="Carter N.M."/>
            <person name="Choi S.-K."/>
            <person name="Codani J.-J."/>
            <person name="Connerton I.F."/>
            <person name="Cummings N.J."/>
            <person name="Daniel R.A."/>
            <person name="Denizot F."/>
            <person name="Devine K.M."/>
            <person name="Duesterhoeft A."/>
            <person name="Ehrlich S.D."/>
            <person name="Emmerson P.T."/>
            <person name="Entian K.-D."/>
            <person name="Errington J."/>
            <person name="Fabret C."/>
            <person name="Ferrari E."/>
            <person name="Foulger D."/>
            <person name="Fritz C."/>
            <person name="Fujita M."/>
            <person name="Fujita Y."/>
            <person name="Fuma S."/>
            <person name="Galizzi A."/>
            <person name="Galleron N."/>
            <person name="Ghim S.-Y."/>
            <person name="Glaser P."/>
            <person name="Goffeau A."/>
            <person name="Golightly E.J."/>
            <person name="Grandi G."/>
            <person name="Guiseppi G."/>
            <person name="Guy B.J."/>
            <person name="Haga K."/>
            <person name="Haiech J."/>
            <person name="Harwood C.R."/>
            <person name="Henaut A."/>
            <person name="Hilbert H."/>
            <person name="Holsappel S."/>
            <person name="Hosono S."/>
            <person name="Hullo M.-F."/>
            <person name="Itaya M."/>
            <person name="Jones L.-M."/>
            <person name="Joris B."/>
            <person name="Karamata D."/>
            <person name="Kasahara Y."/>
            <person name="Klaerr-Blanchard M."/>
            <person name="Klein C."/>
            <person name="Kobayashi Y."/>
            <person name="Koetter P."/>
            <person name="Koningstein G."/>
            <person name="Krogh S."/>
            <person name="Kumano M."/>
            <person name="Kurita K."/>
            <person name="Lapidus A."/>
            <person name="Lardinois S."/>
            <person name="Lauber J."/>
            <person name="Lazarevic V."/>
            <person name="Lee S.-M."/>
            <person name="Levine A."/>
            <person name="Liu H."/>
            <person name="Masuda S."/>
            <person name="Mauel C."/>
            <person name="Medigue C."/>
            <person name="Medina N."/>
            <person name="Mellado R.P."/>
            <person name="Mizuno M."/>
            <person name="Moestl D."/>
            <person name="Nakai S."/>
            <person name="Noback M."/>
            <person name="Noone D."/>
            <person name="O'Reilly M."/>
            <person name="Ogawa K."/>
            <person name="Ogiwara A."/>
            <person name="Oudega B."/>
            <person name="Park S.-H."/>
            <person name="Parro V."/>
            <person name="Pohl T.M."/>
            <person name="Portetelle D."/>
            <person name="Porwollik S."/>
            <person name="Prescott A.M."/>
            <person name="Presecan E."/>
            <person name="Pujic P."/>
            <person name="Purnelle B."/>
            <person name="Rapoport G."/>
            <person name="Rey M."/>
            <person name="Reynolds S."/>
            <person name="Rieger M."/>
            <person name="Rivolta C."/>
            <person name="Rocha E."/>
            <person name="Roche B."/>
            <person name="Rose M."/>
            <person name="Sadaie Y."/>
            <person name="Sato T."/>
            <person name="Scanlan E."/>
            <person name="Schleich S."/>
            <person name="Schroeter R."/>
            <person name="Scoffone F."/>
            <person name="Sekiguchi J."/>
            <person name="Sekowska A."/>
            <person name="Seror S.J."/>
            <person name="Serror P."/>
            <person name="Shin B.-S."/>
            <person name="Soldo B."/>
            <person name="Sorokin A."/>
            <person name="Tacconi E."/>
            <person name="Takagi T."/>
            <person name="Takahashi H."/>
            <person name="Takemaru K."/>
            <person name="Takeuchi M."/>
            <person name="Tamakoshi A."/>
            <person name="Tanaka T."/>
            <person name="Terpstra P."/>
            <person name="Tognoni A."/>
            <person name="Tosato V."/>
            <person name="Uchiyama S."/>
            <person name="Vandenbol M."/>
            <person name="Vannier F."/>
            <person name="Vassarotti A."/>
            <person name="Viari A."/>
            <person name="Wambutt R."/>
            <person name="Wedler E."/>
            <person name="Wedler H."/>
            <person name="Weitzenegger T."/>
            <person name="Winters P."/>
            <person name="Wipat A."/>
            <person name="Yamamoto H."/>
            <person name="Yamane K."/>
            <person name="Yasumoto K."/>
            <person name="Yata K."/>
            <person name="Yoshida K."/>
            <person name="Yoshikawa H.-F."/>
            <person name="Zumstein E."/>
            <person name="Yoshikawa H."/>
            <person name="Danchin A."/>
        </authorList>
    </citation>
    <scope>NUCLEOTIDE SEQUENCE [LARGE SCALE GENOMIC DNA]</scope>
    <source>
        <strain>168</strain>
    </source>
</reference>
<organism>
    <name type="scientific">Bacillus subtilis (strain 168)</name>
    <dbReference type="NCBI Taxonomy" id="224308"/>
    <lineage>
        <taxon>Bacteria</taxon>
        <taxon>Bacillati</taxon>
        <taxon>Bacillota</taxon>
        <taxon>Bacilli</taxon>
        <taxon>Bacillales</taxon>
        <taxon>Bacillaceae</taxon>
        <taxon>Bacillus</taxon>
    </lineage>
</organism>
<gene>
    <name type="primary">ypzC</name>
    <name type="ordered locus">BSU23320</name>
</gene>